<gene>
    <name evidence="1" type="primary">serS</name>
    <name type="ordered locus">SPN23F03870</name>
</gene>
<sequence length="424" mass="47694">MLDIKRIRTDFEAVTEKLATRGVDAAVLNEMKEIDAKRRNILVKVETLKAERNTVSAEIAQAKRNKENTDDKIAAMQNLSAEVKALDAELAEIDAKLTEFTTTLPNIPADSVPVGADEDDNVEVRRWGTPREFDFEPKAHWDLGEDLGILDWERGGKVTGARFLFYKGLGARLERAIYNFMLDEHGKEGYTEVITPYIVNHDSMFGTGQYPKFKEDTFELSDTNFVLIPTAEVPLANYYRDEILDGKDLPIYFTAMSPSFRSEAGSAGRDTRGLIRLHQFHKVEMVKFAKPEESYEELEKMTANAENILQKLNLPYRVVALSTGDMGFSAAKTYDLEVWIPAQNNYREISSCSNTEDFQARRAQIRYRDEADGKVKLLHTLNGSGLAVGRTVAAILENYQNEDGSVTIPEALRPYMGGAEVIKP</sequence>
<proteinExistence type="inferred from homology"/>
<reference key="1">
    <citation type="journal article" date="2009" name="J. Bacteriol.">
        <title>Role of conjugative elements in the evolution of the multidrug-resistant pandemic clone Streptococcus pneumoniae Spain23F ST81.</title>
        <authorList>
            <person name="Croucher N.J."/>
            <person name="Walker D."/>
            <person name="Romero P."/>
            <person name="Lennard N."/>
            <person name="Paterson G.K."/>
            <person name="Bason N.C."/>
            <person name="Mitchell A.M."/>
            <person name="Quail M.A."/>
            <person name="Andrew P.W."/>
            <person name="Parkhill J."/>
            <person name="Bentley S.D."/>
            <person name="Mitchell T.J."/>
        </authorList>
    </citation>
    <scope>NUCLEOTIDE SEQUENCE [LARGE SCALE GENOMIC DNA]</scope>
    <source>
        <strain>ATCC 700669 / Spain 23F-1</strain>
    </source>
</reference>
<dbReference type="EC" id="6.1.1.11" evidence="1"/>
<dbReference type="EMBL" id="FM211187">
    <property type="protein sequence ID" value="CAR68236.1"/>
    <property type="molecule type" value="Genomic_DNA"/>
</dbReference>
<dbReference type="RefSeq" id="WP_000884265.1">
    <property type="nucleotide sequence ID" value="NC_011900.1"/>
</dbReference>
<dbReference type="SMR" id="B8ZLH8"/>
<dbReference type="KEGG" id="sne:SPN23F03870"/>
<dbReference type="HOGENOM" id="CLU_023797_1_1_9"/>
<dbReference type="UniPathway" id="UPA00906">
    <property type="reaction ID" value="UER00895"/>
</dbReference>
<dbReference type="GO" id="GO:0005737">
    <property type="term" value="C:cytoplasm"/>
    <property type="evidence" value="ECO:0007669"/>
    <property type="project" value="UniProtKB-SubCell"/>
</dbReference>
<dbReference type="GO" id="GO:0005524">
    <property type="term" value="F:ATP binding"/>
    <property type="evidence" value="ECO:0007669"/>
    <property type="project" value="UniProtKB-UniRule"/>
</dbReference>
<dbReference type="GO" id="GO:0140096">
    <property type="term" value="F:catalytic activity, acting on a protein"/>
    <property type="evidence" value="ECO:0007669"/>
    <property type="project" value="UniProtKB-ARBA"/>
</dbReference>
<dbReference type="GO" id="GO:0004828">
    <property type="term" value="F:serine-tRNA ligase activity"/>
    <property type="evidence" value="ECO:0007669"/>
    <property type="project" value="UniProtKB-UniRule"/>
</dbReference>
<dbReference type="GO" id="GO:0016740">
    <property type="term" value="F:transferase activity"/>
    <property type="evidence" value="ECO:0007669"/>
    <property type="project" value="UniProtKB-ARBA"/>
</dbReference>
<dbReference type="GO" id="GO:0016260">
    <property type="term" value="P:selenocysteine biosynthetic process"/>
    <property type="evidence" value="ECO:0007669"/>
    <property type="project" value="UniProtKB-UniRule"/>
</dbReference>
<dbReference type="GO" id="GO:0006434">
    <property type="term" value="P:seryl-tRNA aminoacylation"/>
    <property type="evidence" value="ECO:0007669"/>
    <property type="project" value="UniProtKB-UniRule"/>
</dbReference>
<dbReference type="CDD" id="cd00770">
    <property type="entry name" value="SerRS_core"/>
    <property type="match status" value="1"/>
</dbReference>
<dbReference type="Gene3D" id="3.30.930.10">
    <property type="entry name" value="Bira Bifunctional Protein, Domain 2"/>
    <property type="match status" value="1"/>
</dbReference>
<dbReference type="Gene3D" id="1.10.287.40">
    <property type="entry name" value="Serine-tRNA synthetase, tRNA binding domain"/>
    <property type="match status" value="1"/>
</dbReference>
<dbReference type="HAMAP" id="MF_00176">
    <property type="entry name" value="Ser_tRNA_synth_type1"/>
    <property type="match status" value="1"/>
</dbReference>
<dbReference type="InterPro" id="IPR002314">
    <property type="entry name" value="aa-tRNA-synt_IIb"/>
</dbReference>
<dbReference type="InterPro" id="IPR006195">
    <property type="entry name" value="aa-tRNA-synth_II"/>
</dbReference>
<dbReference type="InterPro" id="IPR045864">
    <property type="entry name" value="aa-tRNA-synth_II/BPL/LPL"/>
</dbReference>
<dbReference type="InterPro" id="IPR002317">
    <property type="entry name" value="Ser-tRNA-ligase_type_1"/>
</dbReference>
<dbReference type="InterPro" id="IPR015866">
    <property type="entry name" value="Ser-tRNA-synth_1_N"/>
</dbReference>
<dbReference type="InterPro" id="IPR042103">
    <property type="entry name" value="SerRS_1_N_sf"/>
</dbReference>
<dbReference type="InterPro" id="IPR033729">
    <property type="entry name" value="SerRS_core"/>
</dbReference>
<dbReference type="InterPro" id="IPR010978">
    <property type="entry name" value="tRNA-bd_arm"/>
</dbReference>
<dbReference type="NCBIfam" id="TIGR00414">
    <property type="entry name" value="serS"/>
    <property type="match status" value="1"/>
</dbReference>
<dbReference type="PANTHER" id="PTHR43697:SF1">
    <property type="entry name" value="SERINE--TRNA LIGASE"/>
    <property type="match status" value="1"/>
</dbReference>
<dbReference type="PANTHER" id="PTHR43697">
    <property type="entry name" value="SERYL-TRNA SYNTHETASE"/>
    <property type="match status" value="1"/>
</dbReference>
<dbReference type="Pfam" id="PF02403">
    <property type="entry name" value="Seryl_tRNA_N"/>
    <property type="match status" value="1"/>
</dbReference>
<dbReference type="Pfam" id="PF00587">
    <property type="entry name" value="tRNA-synt_2b"/>
    <property type="match status" value="1"/>
</dbReference>
<dbReference type="PIRSF" id="PIRSF001529">
    <property type="entry name" value="Ser-tRNA-synth_IIa"/>
    <property type="match status" value="1"/>
</dbReference>
<dbReference type="PRINTS" id="PR00981">
    <property type="entry name" value="TRNASYNTHSER"/>
</dbReference>
<dbReference type="SUPFAM" id="SSF55681">
    <property type="entry name" value="Class II aaRS and biotin synthetases"/>
    <property type="match status" value="1"/>
</dbReference>
<dbReference type="SUPFAM" id="SSF46589">
    <property type="entry name" value="tRNA-binding arm"/>
    <property type="match status" value="1"/>
</dbReference>
<dbReference type="PROSITE" id="PS50862">
    <property type="entry name" value="AA_TRNA_LIGASE_II"/>
    <property type="match status" value="1"/>
</dbReference>
<keyword id="KW-0030">Aminoacyl-tRNA synthetase</keyword>
<keyword id="KW-0067">ATP-binding</keyword>
<keyword id="KW-0963">Cytoplasm</keyword>
<keyword id="KW-0436">Ligase</keyword>
<keyword id="KW-0547">Nucleotide-binding</keyword>
<keyword id="KW-0648">Protein biosynthesis</keyword>
<name>SYS_STRPJ</name>
<comment type="function">
    <text evidence="1">Catalyzes the attachment of serine to tRNA(Ser). Is also able to aminoacylate tRNA(Sec) with serine, to form the misacylated tRNA L-seryl-tRNA(Sec), which will be further converted into selenocysteinyl-tRNA(Sec).</text>
</comment>
<comment type="catalytic activity">
    <reaction evidence="1">
        <text>tRNA(Ser) + L-serine + ATP = L-seryl-tRNA(Ser) + AMP + diphosphate + H(+)</text>
        <dbReference type="Rhea" id="RHEA:12292"/>
        <dbReference type="Rhea" id="RHEA-COMP:9669"/>
        <dbReference type="Rhea" id="RHEA-COMP:9703"/>
        <dbReference type="ChEBI" id="CHEBI:15378"/>
        <dbReference type="ChEBI" id="CHEBI:30616"/>
        <dbReference type="ChEBI" id="CHEBI:33019"/>
        <dbReference type="ChEBI" id="CHEBI:33384"/>
        <dbReference type="ChEBI" id="CHEBI:78442"/>
        <dbReference type="ChEBI" id="CHEBI:78533"/>
        <dbReference type="ChEBI" id="CHEBI:456215"/>
        <dbReference type="EC" id="6.1.1.11"/>
    </reaction>
</comment>
<comment type="catalytic activity">
    <reaction evidence="1">
        <text>tRNA(Sec) + L-serine + ATP = L-seryl-tRNA(Sec) + AMP + diphosphate + H(+)</text>
        <dbReference type="Rhea" id="RHEA:42580"/>
        <dbReference type="Rhea" id="RHEA-COMP:9742"/>
        <dbReference type="Rhea" id="RHEA-COMP:10128"/>
        <dbReference type="ChEBI" id="CHEBI:15378"/>
        <dbReference type="ChEBI" id="CHEBI:30616"/>
        <dbReference type="ChEBI" id="CHEBI:33019"/>
        <dbReference type="ChEBI" id="CHEBI:33384"/>
        <dbReference type="ChEBI" id="CHEBI:78442"/>
        <dbReference type="ChEBI" id="CHEBI:78533"/>
        <dbReference type="ChEBI" id="CHEBI:456215"/>
        <dbReference type="EC" id="6.1.1.11"/>
    </reaction>
</comment>
<comment type="pathway">
    <text evidence="1">Aminoacyl-tRNA biosynthesis; selenocysteinyl-tRNA(Sec) biosynthesis; L-seryl-tRNA(Sec) from L-serine and tRNA(Sec): step 1/1.</text>
</comment>
<comment type="subunit">
    <text evidence="1">Homodimer. The tRNA molecule binds across the dimer.</text>
</comment>
<comment type="subcellular location">
    <subcellularLocation>
        <location evidence="1">Cytoplasm</location>
    </subcellularLocation>
</comment>
<comment type="domain">
    <text evidence="1">Consists of two distinct domains, a catalytic core and a N-terminal extension that is involved in tRNA binding.</text>
</comment>
<comment type="similarity">
    <text evidence="1">Belongs to the class-II aminoacyl-tRNA synthetase family. Type-1 seryl-tRNA synthetase subfamily.</text>
</comment>
<protein>
    <recommendedName>
        <fullName evidence="1">Serine--tRNA ligase</fullName>
        <ecNumber evidence="1">6.1.1.11</ecNumber>
    </recommendedName>
    <alternativeName>
        <fullName evidence="1">Seryl-tRNA synthetase</fullName>
        <shortName evidence="1">SerRS</shortName>
    </alternativeName>
    <alternativeName>
        <fullName evidence="1">Seryl-tRNA(Ser/Sec) synthetase</fullName>
    </alternativeName>
</protein>
<organism>
    <name type="scientific">Streptococcus pneumoniae (strain ATCC 700669 / Spain 23F-1)</name>
    <dbReference type="NCBI Taxonomy" id="561276"/>
    <lineage>
        <taxon>Bacteria</taxon>
        <taxon>Bacillati</taxon>
        <taxon>Bacillota</taxon>
        <taxon>Bacilli</taxon>
        <taxon>Lactobacillales</taxon>
        <taxon>Streptococcaceae</taxon>
        <taxon>Streptococcus</taxon>
    </lineage>
</organism>
<feature type="chain" id="PRO_1000199507" description="Serine--tRNA ligase">
    <location>
        <begin position="1"/>
        <end position="424"/>
    </location>
</feature>
<feature type="binding site" evidence="1">
    <location>
        <begin position="230"/>
        <end position="232"/>
    </location>
    <ligand>
        <name>L-serine</name>
        <dbReference type="ChEBI" id="CHEBI:33384"/>
    </ligand>
</feature>
<feature type="binding site" evidence="1">
    <location>
        <begin position="261"/>
        <end position="263"/>
    </location>
    <ligand>
        <name>ATP</name>
        <dbReference type="ChEBI" id="CHEBI:30616"/>
    </ligand>
</feature>
<feature type="binding site" evidence="1">
    <location>
        <position position="284"/>
    </location>
    <ligand>
        <name>L-serine</name>
        <dbReference type="ChEBI" id="CHEBI:33384"/>
    </ligand>
</feature>
<feature type="binding site" evidence="1">
    <location>
        <begin position="348"/>
        <end position="351"/>
    </location>
    <ligand>
        <name>ATP</name>
        <dbReference type="ChEBI" id="CHEBI:30616"/>
    </ligand>
</feature>
<feature type="binding site" evidence="1">
    <location>
        <position position="384"/>
    </location>
    <ligand>
        <name>L-serine</name>
        <dbReference type="ChEBI" id="CHEBI:33384"/>
    </ligand>
</feature>
<accession>B8ZLH8</accession>
<evidence type="ECO:0000255" key="1">
    <source>
        <dbReference type="HAMAP-Rule" id="MF_00176"/>
    </source>
</evidence>